<feature type="chain" id="PRO_0000342719" description="D-fructose 1,6-bisphosphatase class 2/sedoheptulose 1,7-bisphosphatase">
    <location>
        <begin position="1"/>
        <end position="334"/>
    </location>
</feature>
<feature type="binding site" evidence="1">
    <location>
        <position position="33"/>
    </location>
    <ligand>
        <name>Mn(2+)</name>
        <dbReference type="ChEBI" id="CHEBI:29035"/>
        <label>1</label>
    </ligand>
</feature>
<feature type="binding site" evidence="1">
    <location>
        <position position="57"/>
    </location>
    <ligand>
        <name>Mn(2+)</name>
        <dbReference type="ChEBI" id="CHEBI:29035"/>
        <label>1</label>
    </ligand>
</feature>
<feature type="binding site" evidence="1">
    <location>
        <position position="85"/>
    </location>
    <ligand>
        <name>Mn(2+)</name>
        <dbReference type="ChEBI" id="CHEBI:29035"/>
        <label>2</label>
    </ligand>
</feature>
<feature type="binding site" evidence="1">
    <location>
        <begin position="88"/>
        <end position="90"/>
    </location>
    <ligand>
        <name>substrate</name>
    </ligand>
</feature>
<feature type="binding site" evidence="1">
    <location>
        <position position="88"/>
    </location>
    <ligand>
        <name>Mn(2+)</name>
        <dbReference type="ChEBI" id="CHEBI:29035"/>
        <label>2</label>
    </ligand>
</feature>
<feature type="binding site" evidence="1">
    <location>
        <position position="119"/>
    </location>
    <ligand>
        <name>substrate</name>
    </ligand>
</feature>
<feature type="binding site" evidence="1">
    <location>
        <begin position="164"/>
        <end position="166"/>
    </location>
    <ligand>
        <name>substrate</name>
    </ligand>
</feature>
<feature type="binding site" evidence="1">
    <location>
        <begin position="186"/>
        <end position="188"/>
    </location>
    <ligand>
        <name>substrate</name>
    </ligand>
</feature>
<feature type="binding site" evidence="1">
    <location>
        <position position="213"/>
    </location>
    <ligand>
        <name>Mn(2+)</name>
        <dbReference type="ChEBI" id="CHEBI:29035"/>
        <label>2</label>
    </ligand>
</feature>
<organism>
    <name type="scientific">Prochlorococcus marinus (strain MIT 9313)</name>
    <dbReference type="NCBI Taxonomy" id="74547"/>
    <lineage>
        <taxon>Bacteria</taxon>
        <taxon>Bacillati</taxon>
        <taxon>Cyanobacteriota</taxon>
        <taxon>Cyanophyceae</taxon>
        <taxon>Synechococcales</taxon>
        <taxon>Prochlorococcaceae</taxon>
        <taxon>Prochlorococcus</taxon>
    </lineage>
</organism>
<gene>
    <name type="ordered locus">PMT_0568</name>
</gene>
<accession>Q7V808</accession>
<keyword id="KW-0113">Calvin cycle</keyword>
<keyword id="KW-0119">Carbohydrate metabolism</keyword>
<keyword id="KW-0378">Hydrolase</keyword>
<keyword id="KW-0464">Manganese</keyword>
<keyword id="KW-0479">Metal-binding</keyword>
<keyword id="KW-1185">Reference proteome</keyword>
<dbReference type="EC" id="3.1.3.11"/>
<dbReference type="EC" id="3.1.3.37"/>
<dbReference type="EMBL" id="BX548175">
    <property type="protein sequence ID" value="CAE20743.1"/>
    <property type="molecule type" value="Genomic_DNA"/>
</dbReference>
<dbReference type="SMR" id="Q7V808"/>
<dbReference type="KEGG" id="pmt:PMT_0568"/>
<dbReference type="eggNOG" id="COG1494">
    <property type="taxonomic scope" value="Bacteria"/>
</dbReference>
<dbReference type="HOGENOM" id="CLU_054938_0_0_3"/>
<dbReference type="OrthoDB" id="9779353at2"/>
<dbReference type="UniPathway" id="UPA00116"/>
<dbReference type="Proteomes" id="UP000001423">
    <property type="component" value="Chromosome"/>
</dbReference>
<dbReference type="GO" id="GO:0005829">
    <property type="term" value="C:cytosol"/>
    <property type="evidence" value="ECO:0007669"/>
    <property type="project" value="TreeGrafter"/>
</dbReference>
<dbReference type="GO" id="GO:0042132">
    <property type="term" value="F:fructose 1,6-bisphosphate 1-phosphatase activity"/>
    <property type="evidence" value="ECO:0007669"/>
    <property type="project" value="UniProtKB-EC"/>
</dbReference>
<dbReference type="GO" id="GO:0046872">
    <property type="term" value="F:metal ion binding"/>
    <property type="evidence" value="ECO:0007669"/>
    <property type="project" value="UniProtKB-KW"/>
</dbReference>
<dbReference type="GO" id="GO:0050278">
    <property type="term" value="F:sedoheptulose-bisphosphatase activity"/>
    <property type="evidence" value="ECO:0007669"/>
    <property type="project" value="UniProtKB-EC"/>
</dbReference>
<dbReference type="GO" id="GO:0030388">
    <property type="term" value="P:fructose 1,6-bisphosphate metabolic process"/>
    <property type="evidence" value="ECO:0007669"/>
    <property type="project" value="TreeGrafter"/>
</dbReference>
<dbReference type="GO" id="GO:0006094">
    <property type="term" value="P:gluconeogenesis"/>
    <property type="evidence" value="ECO:0007669"/>
    <property type="project" value="InterPro"/>
</dbReference>
<dbReference type="GO" id="GO:0006071">
    <property type="term" value="P:glycerol metabolic process"/>
    <property type="evidence" value="ECO:0007669"/>
    <property type="project" value="InterPro"/>
</dbReference>
<dbReference type="GO" id="GO:0019253">
    <property type="term" value="P:reductive pentose-phosphate cycle"/>
    <property type="evidence" value="ECO:0007669"/>
    <property type="project" value="UniProtKB-UniPathway"/>
</dbReference>
<dbReference type="CDD" id="cd01516">
    <property type="entry name" value="FBPase_glpX"/>
    <property type="match status" value="1"/>
</dbReference>
<dbReference type="FunFam" id="3.40.190.90:FF:000001">
    <property type="entry name" value="Fructose-1,6-bisphosphatase"/>
    <property type="match status" value="1"/>
</dbReference>
<dbReference type="Gene3D" id="3.40.190.90">
    <property type="match status" value="1"/>
</dbReference>
<dbReference type="Gene3D" id="3.30.540.10">
    <property type="entry name" value="Fructose-1,6-Bisphosphatase, subunit A, domain 1"/>
    <property type="match status" value="1"/>
</dbReference>
<dbReference type="InterPro" id="IPR004464">
    <property type="entry name" value="FBPase_class-2/SBPase"/>
</dbReference>
<dbReference type="NCBIfam" id="TIGR00330">
    <property type="entry name" value="glpX"/>
    <property type="match status" value="1"/>
</dbReference>
<dbReference type="PANTHER" id="PTHR30447:SF0">
    <property type="entry name" value="FRUCTOSE-1,6-BISPHOSPHATASE 1 CLASS 2-RELATED"/>
    <property type="match status" value="1"/>
</dbReference>
<dbReference type="PANTHER" id="PTHR30447">
    <property type="entry name" value="FRUCTOSE-1,6-BISPHOSPHATASE CLASS 2"/>
    <property type="match status" value="1"/>
</dbReference>
<dbReference type="Pfam" id="PF03320">
    <property type="entry name" value="FBPase_glpX"/>
    <property type="match status" value="1"/>
</dbReference>
<dbReference type="PIRSF" id="PIRSF004532">
    <property type="entry name" value="GlpX"/>
    <property type="match status" value="1"/>
</dbReference>
<dbReference type="SUPFAM" id="SSF56655">
    <property type="entry name" value="Carbohydrate phosphatase"/>
    <property type="match status" value="1"/>
</dbReference>
<name>FBSB_PROMM</name>
<protein>
    <recommendedName>
        <fullName>D-fructose 1,6-bisphosphatase class 2/sedoheptulose 1,7-bisphosphatase</fullName>
        <shortName>FBPase class 2/SBPase</shortName>
        <ecNumber>3.1.3.11</ecNumber>
        <ecNumber>3.1.3.37</ecNumber>
    </recommendedName>
</protein>
<evidence type="ECO:0000250" key="1"/>
<evidence type="ECO:0000305" key="2"/>
<sequence>MDRTLIQEILEVVEQAAIASAHLTGLGKKDEADAAAVEAMRKRMGQIQMQGRIVIGEGERDEAPMLYIGEEVGSGSGPGVDFAVDPCEGTNLCANNQRGSMAVLAASDRGGLFNAPDFYMKKLAAPPSAKGKVDIRKSATENINILSQCLGLAVSELTIVVMDRARHKGLISEIRATGARVQPISDGDVQAAIACGFAGTGTHCLMGIGAAPEGVISAAAMRALGGHFQGQLVYDPAIAQTSEWADYTKEGNIARLNEMGITDVDKIYEAEELASGKNVVFAGSGITDGLLFHGVKFEPDCTRTSSLVISTLDNTARFTNTVHIKDGAKSIALS</sequence>
<comment type="function">
    <text evidence="1">Catalyzes the hydrolysis of fructose 1,6-bisphosphate (Fru 1,6-P2) and sedoheptulose 1,7-bisphosphate (Sed 1,7-P2) to fructose 6-phosphate and sedoheptulose 7-phosphate, respectively.</text>
</comment>
<comment type="catalytic activity">
    <reaction>
        <text>beta-D-fructose 1,6-bisphosphate + H2O = beta-D-fructose 6-phosphate + phosphate</text>
        <dbReference type="Rhea" id="RHEA:11064"/>
        <dbReference type="ChEBI" id="CHEBI:15377"/>
        <dbReference type="ChEBI" id="CHEBI:32966"/>
        <dbReference type="ChEBI" id="CHEBI:43474"/>
        <dbReference type="ChEBI" id="CHEBI:57634"/>
        <dbReference type="EC" id="3.1.3.11"/>
    </reaction>
</comment>
<comment type="catalytic activity">
    <reaction>
        <text>D-sedoheptulose 1,7-bisphosphate + H2O = D-sedoheptulose 7-phosphate + phosphate</text>
        <dbReference type="Rhea" id="RHEA:17461"/>
        <dbReference type="ChEBI" id="CHEBI:15377"/>
        <dbReference type="ChEBI" id="CHEBI:43474"/>
        <dbReference type="ChEBI" id="CHEBI:57483"/>
        <dbReference type="ChEBI" id="CHEBI:58335"/>
        <dbReference type="EC" id="3.1.3.37"/>
    </reaction>
</comment>
<comment type="cofactor">
    <cofactor evidence="1">
        <name>Mn(2+)</name>
        <dbReference type="ChEBI" id="CHEBI:29035"/>
    </cofactor>
</comment>
<comment type="pathway">
    <text>Carbohydrate biosynthesis; Calvin cycle.</text>
</comment>
<comment type="subunit">
    <text evidence="1">Homotetramer.</text>
</comment>
<comment type="similarity">
    <text evidence="2">Belongs to the FBPase class 2 family.</text>
</comment>
<reference key="1">
    <citation type="journal article" date="2003" name="Nature">
        <title>Genome divergence in two Prochlorococcus ecotypes reflects oceanic niche differentiation.</title>
        <authorList>
            <person name="Rocap G."/>
            <person name="Larimer F.W."/>
            <person name="Lamerdin J.E."/>
            <person name="Malfatti S."/>
            <person name="Chain P."/>
            <person name="Ahlgren N.A."/>
            <person name="Arellano A."/>
            <person name="Coleman M."/>
            <person name="Hauser L."/>
            <person name="Hess W.R."/>
            <person name="Johnson Z.I."/>
            <person name="Land M.L."/>
            <person name="Lindell D."/>
            <person name="Post A.F."/>
            <person name="Regala W."/>
            <person name="Shah M."/>
            <person name="Shaw S.L."/>
            <person name="Steglich C."/>
            <person name="Sullivan M.B."/>
            <person name="Ting C.S."/>
            <person name="Tolonen A."/>
            <person name="Webb E.A."/>
            <person name="Zinser E.R."/>
            <person name="Chisholm S.W."/>
        </authorList>
    </citation>
    <scope>NUCLEOTIDE SEQUENCE [LARGE SCALE GENOMIC DNA]</scope>
    <source>
        <strain>MIT 9313</strain>
    </source>
</reference>
<proteinExistence type="inferred from homology"/>